<gene>
    <name evidence="1" type="primary">pgk</name>
    <name type="ordered locus">SFV_2972</name>
</gene>
<evidence type="ECO:0000255" key="1">
    <source>
        <dbReference type="HAMAP-Rule" id="MF_00145"/>
    </source>
</evidence>
<keyword id="KW-0007">Acetylation</keyword>
<keyword id="KW-0067">ATP-binding</keyword>
<keyword id="KW-0963">Cytoplasm</keyword>
<keyword id="KW-0324">Glycolysis</keyword>
<keyword id="KW-0418">Kinase</keyword>
<keyword id="KW-0547">Nucleotide-binding</keyword>
<keyword id="KW-0808">Transferase</keyword>
<sequence>MSVIKMTDLDLAGKRVFIRADLNVPVKDGKVTSDARIRASLPTIELALKQGAKVMVTSHLGRPTEGEYNEEFSLLPVVNYLKDKLSNPVRLVKDYLDGVDVAEGELVVLENVRFNKGEKKDDETLSKKYAALCDVFVMDAFGTAHRAQASTHGIGKFADVACAGPLLAAELDALGKALKEPARPMVAIVGGSKVSTKLTVLDSLSKIADQLIVGGGIANTFIAAQGHDVGKSLYEADLVDEAKRLLTTCNIPVPSDVRVATEFSETAPATLKSVNDVKADEQILDIGDASAQELAEILKNAKTILWNGPVGVFEFPNFRKGTEIVANAIADSEAFSIAGGGDTLAAIDLFGIADKISYISTGGGAFLEFVEGKVLPAVAMLEERAKK</sequence>
<organism>
    <name type="scientific">Shigella flexneri serotype 5b (strain 8401)</name>
    <dbReference type="NCBI Taxonomy" id="373384"/>
    <lineage>
        <taxon>Bacteria</taxon>
        <taxon>Pseudomonadati</taxon>
        <taxon>Pseudomonadota</taxon>
        <taxon>Gammaproteobacteria</taxon>
        <taxon>Enterobacterales</taxon>
        <taxon>Enterobacteriaceae</taxon>
        <taxon>Shigella</taxon>
    </lineage>
</organism>
<proteinExistence type="inferred from homology"/>
<name>PGK_SHIF8</name>
<feature type="chain" id="PRO_1000058066" description="Phosphoglycerate kinase">
    <location>
        <begin position="1"/>
        <end position="387"/>
    </location>
</feature>
<feature type="binding site" evidence="1">
    <location>
        <begin position="21"/>
        <end position="23"/>
    </location>
    <ligand>
        <name>substrate</name>
    </ligand>
</feature>
<feature type="binding site" evidence="1">
    <location>
        <position position="36"/>
    </location>
    <ligand>
        <name>substrate</name>
    </ligand>
</feature>
<feature type="binding site" evidence="1">
    <location>
        <begin position="59"/>
        <end position="62"/>
    </location>
    <ligand>
        <name>substrate</name>
    </ligand>
</feature>
<feature type="binding site" evidence="1">
    <location>
        <position position="113"/>
    </location>
    <ligand>
        <name>substrate</name>
    </ligand>
</feature>
<feature type="binding site" evidence="1">
    <location>
        <position position="146"/>
    </location>
    <ligand>
        <name>substrate</name>
    </ligand>
</feature>
<feature type="binding site" evidence="1">
    <location>
        <position position="197"/>
    </location>
    <ligand>
        <name>ATP</name>
        <dbReference type="ChEBI" id="CHEBI:30616"/>
    </ligand>
</feature>
<feature type="binding site" evidence="1">
    <location>
        <position position="314"/>
    </location>
    <ligand>
        <name>ATP</name>
        <dbReference type="ChEBI" id="CHEBI:30616"/>
    </ligand>
</feature>
<feature type="binding site" evidence="1">
    <location>
        <begin position="340"/>
        <end position="343"/>
    </location>
    <ligand>
        <name>ATP</name>
        <dbReference type="ChEBI" id="CHEBI:30616"/>
    </ligand>
</feature>
<feature type="modified residue" description="N6-acetyllysine" evidence="1">
    <location>
        <position position="84"/>
    </location>
</feature>
<reference key="1">
    <citation type="journal article" date="2006" name="BMC Genomics">
        <title>Complete genome sequence of Shigella flexneri 5b and comparison with Shigella flexneri 2a.</title>
        <authorList>
            <person name="Nie H."/>
            <person name="Yang F."/>
            <person name="Zhang X."/>
            <person name="Yang J."/>
            <person name="Chen L."/>
            <person name="Wang J."/>
            <person name="Xiong Z."/>
            <person name="Peng J."/>
            <person name="Sun L."/>
            <person name="Dong J."/>
            <person name="Xue Y."/>
            <person name="Xu X."/>
            <person name="Chen S."/>
            <person name="Yao Z."/>
            <person name="Shen Y."/>
            <person name="Jin Q."/>
        </authorList>
    </citation>
    <scope>NUCLEOTIDE SEQUENCE [LARGE SCALE GENOMIC DNA]</scope>
    <source>
        <strain>8401</strain>
    </source>
</reference>
<accession>Q0T0X4</accession>
<protein>
    <recommendedName>
        <fullName evidence="1">Phosphoglycerate kinase</fullName>
        <ecNumber evidence="1">2.7.2.3</ecNumber>
    </recommendedName>
</protein>
<dbReference type="EC" id="2.7.2.3" evidence="1"/>
<dbReference type="EMBL" id="CP000266">
    <property type="protein sequence ID" value="ABF05041.1"/>
    <property type="molecule type" value="Genomic_DNA"/>
</dbReference>
<dbReference type="RefSeq" id="WP_000111269.1">
    <property type="nucleotide sequence ID" value="NC_008258.1"/>
</dbReference>
<dbReference type="SMR" id="Q0T0X4"/>
<dbReference type="GeneID" id="89517738"/>
<dbReference type="KEGG" id="sfv:SFV_2972"/>
<dbReference type="HOGENOM" id="CLU_025427_0_2_6"/>
<dbReference type="UniPathway" id="UPA00109">
    <property type="reaction ID" value="UER00185"/>
</dbReference>
<dbReference type="Proteomes" id="UP000000659">
    <property type="component" value="Chromosome"/>
</dbReference>
<dbReference type="GO" id="GO:0005829">
    <property type="term" value="C:cytosol"/>
    <property type="evidence" value="ECO:0007669"/>
    <property type="project" value="TreeGrafter"/>
</dbReference>
<dbReference type="GO" id="GO:0043531">
    <property type="term" value="F:ADP binding"/>
    <property type="evidence" value="ECO:0007669"/>
    <property type="project" value="TreeGrafter"/>
</dbReference>
<dbReference type="GO" id="GO:0005524">
    <property type="term" value="F:ATP binding"/>
    <property type="evidence" value="ECO:0007669"/>
    <property type="project" value="UniProtKB-KW"/>
</dbReference>
<dbReference type="GO" id="GO:0004618">
    <property type="term" value="F:phosphoglycerate kinase activity"/>
    <property type="evidence" value="ECO:0007669"/>
    <property type="project" value="UniProtKB-UniRule"/>
</dbReference>
<dbReference type="GO" id="GO:0006094">
    <property type="term" value="P:gluconeogenesis"/>
    <property type="evidence" value="ECO:0007669"/>
    <property type="project" value="TreeGrafter"/>
</dbReference>
<dbReference type="GO" id="GO:0006096">
    <property type="term" value="P:glycolytic process"/>
    <property type="evidence" value="ECO:0007669"/>
    <property type="project" value="UniProtKB-UniRule"/>
</dbReference>
<dbReference type="CDD" id="cd00318">
    <property type="entry name" value="Phosphoglycerate_kinase"/>
    <property type="match status" value="1"/>
</dbReference>
<dbReference type="FunFam" id="3.40.50.1260:FF:000001">
    <property type="entry name" value="Phosphoglycerate kinase"/>
    <property type="match status" value="1"/>
</dbReference>
<dbReference type="FunFam" id="3.40.50.1260:FF:000002">
    <property type="entry name" value="Phosphoglycerate kinase"/>
    <property type="match status" value="1"/>
</dbReference>
<dbReference type="Gene3D" id="3.40.50.1260">
    <property type="entry name" value="Phosphoglycerate kinase, N-terminal domain"/>
    <property type="match status" value="2"/>
</dbReference>
<dbReference type="HAMAP" id="MF_00145">
    <property type="entry name" value="Phosphoglyc_kinase"/>
    <property type="match status" value="1"/>
</dbReference>
<dbReference type="InterPro" id="IPR001576">
    <property type="entry name" value="Phosphoglycerate_kinase"/>
</dbReference>
<dbReference type="InterPro" id="IPR015911">
    <property type="entry name" value="Phosphoglycerate_kinase_CS"/>
</dbReference>
<dbReference type="InterPro" id="IPR015824">
    <property type="entry name" value="Phosphoglycerate_kinase_N"/>
</dbReference>
<dbReference type="InterPro" id="IPR036043">
    <property type="entry name" value="Phosphoglycerate_kinase_sf"/>
</dbReference>
<dbReference type="PANTHER" id="PTHR11406">
    <property type="entry name" value="PHOSPHOGLYCERATE KINASE"/>
    <property type="match status" value="1"/>
</dbReference>
<dbReference type="PANTHER" id="PTHR11406:SF23">
    <property type="entry name" value="PHOSPHOGLYCERATE KINASE 1, CHLOROPLASTIC-RELATED"/>
    <property type="match status" value="1"/>
</dbReference>
<dbReference type="Pfam" id="PF00162">
    <property type="entry name" value="PGK"/>
    <property type="match status" value="1"/>
</dbReference>
<dbReference type="PIRSF" id="PIRSF000724">
    <property type="entry name" value="Pgk"/>
    <property type="match status" value="1"/>
</dbReference>
<dbReference type="PRINTS" id="PR00477">
    <property type="entry name" value="PHGLYCKINASE"/>
</dbReference>
<dbReference type="SUPFAM" id="SSF53748">
    <property type="entry name" value="Phosphoglycerate kinase"/>
    <property type="match status" value="1"/>
</dbReference>
<dbReference type="PROSITE" id="PS00111">
    <property type="entry name" value="PGLYCERATE_KINASE"/>
    <property type="match status" value="1"/>
</dbReference>
<comment type="catalytic activity">
    <reaction evidence="1">
        <text>(2R)-3-phosphoglycerate + ATP = (2R)-3-phospho-glyceroyl phosphate + ADP</text>
        <dbReference type="Rhea" id="RHEA:14801"/>
        <dbReference type="ChEBI" id="CHEBI:30616"/>
        <dbReference type="ChEBI" id="CHEBI:57604"/>
        <dbReference type="ChEBI" id="CHEBI:58272"/>
        <dbReference type="ChEBI" id="CHEBI:456216"/>
        <dbReference type="EC" id="2.7.2.3"/>
    </reaction>
</comment>
<comment type="pathway">
    <text evidence="1">Carbohydrate degradation; glycolysis; pyruvate from D-glyceraldehyde 3-phosphate: step 2/5.</text>
</comment>
<comment type="subunit">
    <text evidence="1">Monomer.</text>
</comment>
<comment type="subcellular location">
    <subcellularLocation>
        <location evidence="1">Cytoplasm</location>
    </subcellularLocation>
</comment>
<comment type="similarity">
    <text evidence="1">Belongs to the phosphoglycerate kinase family.</text>
</comment>